<name>SPVIF_BACSU</name>
<accession>O31625</accession>
<reference key="1">
    <citation type="journal article" date="1997" name="Nature">
        <title>The complete genome sequence of the Gram-positive bacterium Bacillus subtilis.</title>
        <authorList>
            <person name="Kunst F."/>
            <person name="Ogasawara N."/>
            <person name="Moszer I."/>
            <person name="Albertini A.M."/>
            <person name="Alloni G."/>
            <person name="Azevedo V."/>
            <person name="Bertero M.G."/>
            <person name="Bessieres P."/>
            <person name="Bolotin A."/>
            <person name="Borchert S."/>
            <person name="Borriss R."/>
            <person name="Boursier L."/>
            <person name="Brans A."/>
            <person name="Braun M."/>
            <person name="Brignell S.C."/>
            <person name="Bron S."/>
            <person name="Brouillet S."/>
            <person name="Bruschi C.V."/>
            <person name="Caldwell B."/>
            <person name="Capuano V."/>
            <person name="Carter N.M."/>
            <person name="Choi S.-K."/>
            <person name="Codani J.-J."/>
            <person name="Connerton I.F."/>
            <person name="Cummings N.J."/>
            <person name="Daniel R.A."/>
            <person name="Denizot F."/>
            <person name="Devine K.M."/>
            <person name="Duesterhoeft A."/>
            <person name="Ehrlich S.D."/>
            <person name="Emmerson P.T."/>
            <person name="Entian K.-D."/>
            <person name="Errington J."/>
            <person name="Fabret C."/>
            <person name="Ferrari E."/>
            <person name="Foulger D."/>
            <person name="Fritz C."/>
            <person name="Fujita M."/>
            <person name="Fujita Y."/>
            <person name="Fuma S."/>
            <person name="Galizzi A."/>
            <person name="Galleron N."/>
            <person name="Ghim S.-Y."/>
            <person name="Glaser P."/>
            <person name="Goffeau A."/>
            <person name="Golightly E.J."/>
            <person name="Grandi G."/>
            <person name="Guiseppi G."/>
            <person name="Guy B.J."/>
            <person name="Haga K."/>
            <person name="Haiech J."/>
            <person name="Harwood C.R."/>
            <person name="Henaut A."/>
            <person name="Hilbert H."/>
            <person name="Holsappel S."/>
            <person name="Hosono S."/>
            <person name="Hullo M.-F."/>
            <person name="Itaya M."/>
            <person name="Jones L.-M."/>
            <person name="Joris B."/>
            <person name="Karamata D."/>
            <person name="Kasahara Y."/>
            <person name="Klaerr-Blanchard M."/>
            <person name="Klein C."/>
            <person name="Kobayashi Y."/>
            <person name="Koetter P."/>
            <person name="Koningstein G."/>
            <person name="Krogh S."/>
            <person name="Kumano M."/>
            <person name="Kurita K."/>
            <person name="Lapidus A."/>
            <person name="Lardinois S."/>
            <person name="Lauber J."/>
            <person name="Lazarevic V."/>
            <person name="Lee S.-M."/>
            <person name="Levine A."/>
            <person name="Liu H."/>
            <person name="Masuda S."/>
            <person name="Mauel C."/>
            <person name="Medigue C."/>
            <person name="Medina N."/>
            <person name="Mellado R.P."/>
            <person name="Mizuno M."/>
            <person name="Moestl D."/>
            <person name="Nakai S."/>
            <person name="Noback M."/>
            <person name="Noone D."/>
            <person name="O'Reilly M."/>
            <person name="Ogawa K."/>
            <person name="Ogiwara A."/>
            <person name="Oudega B."/>
            <person name="Park S.-H."/>
            <person name="Parro V."/>
            <person name="Pohl T.M."/>
            <person name="Portetelle D."/>
            <person name="Porwollik S."/>
            <person name="Prescott A.M."/>
            <person name="Presecan E."/>
            <person name="Pujic P."/>
            <person name="Purnelle B."/>
            <person name="Rapoport G."/>
            <person name="Rey M."/>
            <person name="Reynolds S."/>
            <person name="Rieger M."/>
            <person name="Rivolta C."/>
            <person name="Rocha E."/>
            <person name="Roche B."/>
            <person name="Rose M."/>
            <person name="Sadaie Y."/>
            <person name="Sato T."/>
            <person name="Scanlan E."/>
            <person name="Schleich S."/>
            <person name="Schroeter R."/>
            <person name="Scoffone F."/>
            <person name="Sekiguchi J."/>
            <person name="Sekowska A."/>
            <person name="Seror S.J."/>
            <person name="Serror P."/>
            <person name="Shin B.-S."/>
            <person name="Soldo B."/>
            <person name="Sorokin A."/>
            <person name="Tacconi E."/>
            <person name="Takagi T."/>
            <person name="Takahashi H."/>
            <person name="Takemaru K."/>
            <person name="Takeuchi M."/>
            <person name="Tamakoshi A."/>
            <person name="Tanaka T."/>
            <person name="Terpstra P."/>
            <person name="Tognoni A."/>
            <person name="Tosato V."/>
            <person name="Uchiyama S."/>
            <person name="Vandenbol M."/>
            <person name="Vannier F."/>
            <person name="Vassarotti A."/>
            <person name="Viari A."/>
            <person name="Wambutt R."/>
            <person name="Wedler E."/>
            <person name="Wedler H."/>
            <person name="Weitzenegger T."/>
            <person name="Winters P."/>
            <person name="Wipat A."/>
            <person name="Yamamoto H."/>
            <person name="Yamane K."/>
            <person name="Yasumoto K."/>
            <person name="Yata K."/>
            <person name="Yoshida K."/>
            <person name="Yoshikawa H.-F."/>
            <person name="Zumstein E."/>
            <person name="Yoshikawa H."/>
            <person name="Danchin A."/>
        </authorList>
    </citation>
    <scope>NUCLEOTIDE SEQUENCE [LARGE SCALE GENOMIC DNA]</scope>
    <source>
        <strain>168</strain>
    </source>
</reference>
<reference key="2">
    <citation type="journal article" date="2003" name="Microbiology">
        <title>Bacillus subtilis spoVIF (yjcC) gene, involved in coat assembly and spore resistance.</title>
        <authorList>
            <person name="Kuwana R."/>
            <person name="Yamamura S."/>
            <person name="Ikejiri H."/>
            <person name="Kobayashi K."/>
            <person name="Ogasawara N."/>
            <person name="Asai K."/>
            <person name="Sadaie Y."/>
            <person name="Takamatsu H."/>
            <person name="Watabe K."/>
        </authorList>
    </citation>
    <scope>FUNCTION</scope>
    <scope>INDUCTION</scope>
    <scope>DISRUPTION PHENOTYPE</scope>
    <source>
        <strain>168</strain>
    </source>
</reference>
<reference key="3">
    <citation type="journal article" date="2004" name="Microbiology">
        <title>Functional relationship between SpoVIF and GerE in gene regulation during sporulation of Bacillus subtilis.</title>
        <authorList>
            <person name="Kuwana R."/>
            <person name="Ikejiri H."/>
            <person name="Yamamura S."/>
            <person name="Takamatsu H."/>
            <person name="Watabe K."/>
        </authorList>
    </citation>
    <scope>FUNCTION</scope>
    <scope>SUBCELLULAR LOCATION</scope>
    <source>
        <strain>168</strain>
    </source>
</reference>
<evidence type="ECO:0000269" key="1">
    <source>
    </source>
</evidence>
<evidence type="ECO:0000269" key="2">
    <source>
    </source>
</evidence>
<evidence type="ECO:0000303" key="3">
    <source>
    </source>
</evidence>
<protein>
    <recommendedName>
        <fullName>Sporulation-specific transcription factor SpoVIF</fullName>
    </recommendedName>
    <alternativeName>
        <fullName>Stage VI sporulation protein F</fullName>
    </alternativeName>
</protein>
<gene>
    <name evidence="3" type="primary">spoVIF</name>
    <name type="synonym">yjcC</name>
    <name type="ordered locus">BSU11810</name>
</gene>
<keyword id="KW-0963">Cytoplasm</keyword>
<keyword id="KW-1185">Reference proteome</keyword>
<keyword id="KW-0749">Sporulation</keyword>
<keyword id="KW-0804">Transcription</keyword>
<keyword id="KW-0805">Transcription regulation</keyword>
<sequence>MDNQFFKNIEKKTGVKMQDVMNLAGSLQNANFKDENTVRSVINRVAQMANRRVPKELEDKIVESITSGKEKLDFGTISKMMDNK</sequence>
<proteinExistence type="evidence at transcript level"/>
<dbReference type="EMBL" id="AL009126">
    <property type="protein sequence ID" value="CAB13038.2"/>
    <property type="molecule type" value="Genomic_DNA"/>
</dbReference>
<dbReference type="PIR" id="C69846">
    <property type="entry name" value="C69846"/>
</dbReference>
<dbReference type="RefSeq" id="NP_389063.2">
    <property type="nucleotide sequence ID" value="NC_000964.3"/>
</dbReference>
<dbReference type="RefSeq" id="WP_003232870.1">
    <property type="nucleotide sequence ID" value="NZ_OZ025638.1"/>
</dbReference>
<dbReference type="SMR" id="O31625"/>
<dbReference type="FunCoup" id="O31625">
    <property type="interactions" value="143"/>
</dbReference>
<dbReference type="STRING" id="224308.BSU11810"/>
<dbReference type="PaxDb" id="224308-BSU11810"/>
<dbReference type="EnsemblBacteria" id="CAB13038">
    <property type="protein sequence ID" value="CAB13038"/>
    <property type="gene ID" value="BSU_11810"/>
</dbReference>
<dbReference type="GeneID" id="939384"/>
<dbReference type="KEGG" id="bsu:BSU11810"/>
<dbReference type="PATRIC" id="fig|224308.179.peg.1272"/>
<dbReference type="eggNOG" id="ENOG5032Y6J">
    <property type="taxonomic scope" value="Bacteria"/>
</dbReference>
<dbReference type="InParanoid" id="O31625"/>
<dbReference type="OrthoDB" id="2474248at2"/>
<dbReference type="BioCyc" id="BSUB:BSU11810-MONOMER"/>
<dbReference type="Proteomes" id="UP000001570">
    <property type="component" value="Chromosome"/>
</dbReference>
<dbReference type="GO" id="GO:0005737">
    <property type="term" value="C:cytoplasm"/>
    <property type="evidence" value="ECO:0007669"/>
    <property type="project" value="UniProtKB-SubCell"/>
</dbReference>
<dbReference type="GO" id="GO:0030435">
    <property type="term" value="P:sporulation resulting in formation of a cellular spore"/>
    <property type="evidence" value="ECO:0007669"/>
    <property type="project" value="UniProtKB-KW"/>
</dbReference>
<dbReference type="InterPro" id="IPR025942">
    <property type="entry name" value="SpoVIF"/>
</dbReference>
<dbReference type="Pfam" id="PF14069">
    <property type="entry name" value="SpoVIF"/>
    <property type="match status" value="1"/>
</dbReference>
<organism>
    <name type="scientific">Bacillus subtilis (strain 168)</name>
    <dbReference type="NCBI Taxonomy" id="224308"/>
    <lineage>
        <taxon>Bacteria</taxon>
        <taxon>Bacillati</taxon>
        <taxon>Bacillota</taxon>
        <taxon>Bacilli</taxon>
        <taxon>Bacillales</taxon>
        <taxon>Bacillaceae</taxon>
        <taxon>Bacillus</taxon>
    </lineage>
</organism>
<feature type="chain" id="PRO_0000360436" description="Sporulation-specific transcription factor SpoVIF">
    <location>
        <begin position="1"/>
        <end position="84"/>
    </location>
</feature>
<comment type="function">
    <text evidence="1 2">Transcription factor involved in spore coat assembly and spore resistance (PubMed:14523132). Required for gene regulation during the latter stages of sporulation (PubMed:14702409). Regulates the transcription of at least cgeA, cotG and cotS (PubMed:14702409). May directly or indirectly control the function of the GerE protein (PubMed:14702409).</text>
</comment>
<comment type="subcellular location">
    <subcellularLocation>
        <location evidence="2">Cytoplasm</location>
    </subcellularLocation>
    <text evidence="2">Localizes in the mother cell compartment during spore development.</text>
</comment>
<comment type="induction">
    <text evidence="1">Transcribed by the SigK RNA polymerase beginning 4 hours after the onset of sporulation.</text>
</comment>
<comment type="disruption phenotype">
    <text evidence="1">Disruption of the gene results in a reduction in resistance of the mutant spores to lysozyme and heat (PubMed:14523132). Mutant shows a defect of sporulation at stage VI, resulting in loss of spore coats (PubMed:14523132).</text>
</comment>